<name>FBW1A_MOUSE</name>
<reference evidence="25 27" key="1">
    <citation type="journal article" date="1998" name="Nature">
        <title>Identification of the receptor component of the IkappaBalpha-ubiquitin ligase.</title>
        <authorList>
            <person name="Yaron A."/>
            <person name="Hatzubai A."/>
            <person name="Davis M."/>
            <person name="Lavon I."/>
            <person name="Amit S."/>
            <person name="Manning A.M."/>
            <person name="Andersen J.S."/>
            <person name="Mann M."/>
            <person name="Mercurio F."/>
            <person name="Ben-Neriah Y."/>
        </authorList>
    </citation>
    <scope>NUCLEOTIDE SEQUENCE [MRNA] (ISOFORM 2)</scope>
    <scope>FUNCTION</scope>
    <scope>PATHWAY</scope>
    <scope>INTERACTION WITH PHOSPHORYLATED NFKBIA</scope>
</reference>
<reference evidence="25 29" key="2">
    <citation type="journal article" date="1999" name="Curr. Biol.">
        <title>A family of mammalian F-box proteins.</title>
        <authorList>
            <person name="Winston J.T."/>
            <person name="Koepp D.M."/>
            <person name="Zhu C."/>
            <person name="Elledge S.J."/>
            <person name="Harper J.W."/>
        </authorList>
    </citation>
    <scope>NUCLEOTIDE SEQUENCE [MRNA] (ISOFORM 2)</scope>
</reference>
<reference evidence="25 26" key="3">
    <citation type="journal article" date="1999" name="Genes Dev.">
        <title>Signal-induced ubiquitination of IkappaBalpha by the F-box protein Slimb/beta-TrCP.</title>
        <authorList>
            <person name="Spencer E."/>
            <person name="Jiang J."/>
            <person name="Chen Z.J."/>
        </authorList>
    </citation>
    <scope>NUCLEOTIDE SEQUENCE [MRNA] (ISOFORM 2)</scope>
    <scope>FUNCTION</scope>
    <scope>PATHWAY</scope>
    <scope>IDENTIFICATION IN A COMPLEX WITH PHOSPHORYLATED NFKBIA; SKP1 AND RELA</scope>
    <source>
        <tissue evidence="17">Embryo</tissue>
    </source>
</reference>
<reference evidence="25 28" key="4">
    <citation type="journal article" date="1999" name="Proc. Natl. Acad. Sci. U.S.A.">
        <title>Ubiquitin-dependent degradation of IkappaBalpha is mediated by a ubiquitin ligase Skp1/Cul 1/F-box protein FWD1.</title>
        <authorList>
            <person name="Hatakeyama S."/>
            <person name="Kitagawa M."/>
            <person name="Nakayama K."/>
            <person name="Shirane M."/>
            <person name="Matsumoto M."/>
            <person name="Hattori K."/>
            <person name="Higashi H."/>
            <person name="Nakano H."/>
            <person name="Okumura K."/>
            <person name="Onoe K."/>
            <person name="Good R.A."/>
            <person name="Nakayama K."/>
        </authorList>
    </citation>
    <scope>NUCLEOTIDE SEQUENCE [MRNA] (ISOFORM 2)</scope>
    <scope>FUNCTION</scope>
    <scope>PATHWAY</scope>
    <scope>IDENTIFICATION IN A COMPLEX WITH PHOSPHORYLATED NFKBIA; SKP1 AND CUL1</scope>
</reference>
<reference evidence="25 31" key="5">
    <citation type="journal article" date="2001" name="Genomics">
        <title>Characterization of a mouse gene (Fbxw6) that encodes a homologue of Caenorhabditis elegans SEL-10.</title>
        <authorList>
            <person name="Maruyama S."/>
            <person name="Hatakeyama S."/>
            <person name="Nakayama K."/>
            <person name="Ishida N."/>
            <person name="Kawakami K."/>
            <person name="Nakayama K."/>
        </authorList>
    </citation>
    <scope>NUCLEOTIDE SEQUENCE [GENOMIC DNA]</scope>
    <scope>IDENTIFICATION IN A COMPLEX WITH SKP1 AND CUL1</scope>
    <scope>SUBCELLULAR LOCATION</scope>
    <scope>TISSUE SPECIFICITY</scope>
    <source>
        <strain evidence="7">129/SvJ</strain>
    </source>
</reference>
<reference evidence="33" key="6">
    <citation type="journal article" date="2005" name="Science">
        <title>The transcriptional landscape of the mammalian genome.</title>
        <authorList>
            <person name="Carninci P."/>
            <person name="Kasukawa T."/>
            <person name="Katayama S."/>
            <person name="Gough J."/>
            <person name="Frith M.C."/>
            <person name="Maeda N."/>
            <person name="Oyama R."/>
            <person name="Ravasi T."/>
            <person name="Lenhard B."/>
            <person name="Wells C."/>
            <person name="Kodzius R."/>
            <person name="Shimokawa K."/>
            <person name="Bajic V.B."/>
            <person name="Brenner S.E."/>
            <person name="Batalov S."/>
            <person name="Forrest A.R."/>
            <person name="Zavolan M."/>
            <person name="Davis M.J."/>
            <person name="Wilming L.G."/>
            <person name="Aidinis V."/>
            <person name="Allen J.E."/>
            <person name="Ambesi-Impiombato A."/>
            <person name="Apweiler R."/>
            <person name="Aturaliya R.N."/>
            <person name="Bailey T.L."/>
            <person name="Bansal M."/>
            <person name="Baxter L."/>
            <person name="Beisel K.W."/>
            <person name="Bersano T."/>
            <person name="Bono H."/>
            <person name="Chalk A.M."/>
            <person name="Chiu K.P."/>
            <person name="Choudhary V."/>
            <person name="Christoffels A."/>
            <person name="Clutterbuck D.R."/>
            <person name="Crowe M.L."/>
            <person name="Dalla E."/>
            <person name="Dalrymple B.P."/>
            <person name="de Bono B."/>
            <person name="Della Gatta G."/>
            <person name="di Bernardo D."/>
            <person name="Down T."/>
            <person name="Engstrom P."/>
            <person name="Fagiolini M."/>
            <person name="Faulkner G."/>
            <person name="Fletcher C.F."/>
            <person name="Fukushima T."/>
            <person name="Furuno M."/>
            <person name="Futaki S."/>
            <person name="Gariboldi M."/>
            <person name="Georgii-Hemming P."/>
            <person name="Gingeras T.R."/>
            <person name="Gojobori T."/>
            <person name="Green R.E."/>
            <person name="Gustincich S."/>
            <person name="Harbers M."/>
            <person name="Hayashi Y."/>
            <person name="Hensch T.K."/>
            <person name="Hirokawa N."/>
            <person name="Hill D."/>
            <person name="Huminiecki L."/>
            <person name="Iacono M."/>
            <person name="Ikeo K."/>
            <person name="Iwama A."/>
            <person name="Ishikawa T."/>
            <person name="Jakt M."/>
            <person name="Kanapin A."/>
            <person name="Katoh M."/>
            <person name="Kawasawa Y."/>
            <person name="Kelso J."/>
            <person name="Kitamura H."/>
            <person name="Kitano H."/>
            <person name="Kollias G."/>
            <person name="Krishnan S.P."/>
            <person name="Kruger A."/>
            <person name="Kummerfeld S.K."/>
            <person name="Kurochkin I.V."/>
            <person name="Lareau L.F."/>
            <person name="Lazarevic D."/>
            <person name="Lipovich L."/>
            <person name="Liu J."/>
            <person name="Liuni S."/>
            <person name="McWilliam S."/>
            <person name="Madan Babu M."/>
            <person name="Madera M."/>
            <person name="Marchionni L."/>
            <person name="Matsuda H."/>
            <person name="Matsuzawa S."/>
            <person name="Miki H."/>
            <person name="Mignone F."/>
            <person name="Miyake S."/>
            <person name="Morris K."/>
            <person name="Mottagui-Tabar S."/>
            <person name="Mulder N."/>
            <person name="Nakano N."/>
            <person name="Nakauchi H."/>
            <person name="Ng P."/>
            <person name="Nilsson R."/>
            <person name="Nishiguchi S."/>
            <person name="Nishikawa S."/>
            <person name="Nori F."/>
            <person name="Ohara O."/>
            <person name="Okazaki Y."/>
            <person name="Orlando V."/>
            <person name="Pang K.C."/>
            <person name="Pavan W.J."/>
            <person name="Pavesi G."/>
            <person name="Pesole G."/>
            <person name="Petrovsky N."/>
            <person name="Piazza S."/>
            <person name="Reed J."/>
            <person name="Reid J.F."/>
            <person name="Ring B.Z."/>
            <person name="Ringwald M."/>
            <person name="Rost B."/>
            <person name="Ruan Y."/>
            <person name="Salzberg S.L."/>
            <person name="Sandelin A."/>
            <person name="Schneider C."/>
            <person name="Schoenbach C."/>
            <person name="Sekiguchi K."/>
            <person name="Semple C.A."/>
            <person name="Seno S."/>
            <person name="Sessa L."/>
            <person name="Sheng Y."/>
            <person name="Shibata Y."/>
            <person name="Shimada H."/>
            <person name="Shimada K."/>
            <person name="Silva D."/>
            <person name="Sinclair B."/>
            <person name="Sperling S."/>
            <person name="Stupka E."/>
            <person name="Sugiura K."/>
            <person name="Sultana R."/>
            <person name="Takenaka Y."/>
            <person name="Taki K."/>
            <person name="Tammoja K."/>
            <person name="Tan S.L."/>
            <person name="Tang S."/>
            <person name="Taylor M.S."/>
            <person name="Tegner J."/>
            <person name="Teichmann S.A."/>
            <person name="Ueda H.R."/>
            <person name="van Nimwegen E."/>
            <person name="Verardo R."/>
            <person name="Wei C.L."/>
            <person name="Yagi K."/>
            <person name="Yamanishi H."/>
            <person name="Zabarovsky E."/>
            <person name="Zhu S."/>
            <person name="Zimmer A."/>
            <person name="Hide W."/>
            <person name="Bult C."/>
            <person name="Grimmond S.M."/>
            <person name="Teasdale R.D."/>
            <person name="Liu E.T."/>
            <person name="Brusic V."/>
            <person name="Quackenbush J."/>
            <person name="Wahlestedt C."/>
            <person name="Mattick J.S."/>
            <person name="Hume D.A."/>
            <person name="Kai C."/>
            <person name="Sasaki D."/>
            <person name="Tomaru Y."/>
            <person name="Fukuda S."/>
            <person name="Kanamori-Katayama M."/>
            <person name="Suzuki M."/>
            <person name="Aoki J."/>
            <person name="Arakawa T."/>
            <person name="Iida J."/>
            <person name="Imamura K."/>
            <person name="Itoh M."/>
            <person name="Kato T."/>
            <person name="Kawaji H."/>
            <person name="Kawagashira N."/>
            <person name="Kawashima T."/>
            <person name="Kojima M."/>
            <person name="Kondo S."/>
            <person name="Konno H."/>
            <person name="Nakano K."/>
            <person name="Ninomiya N."/>
            <person name="Nishio T."/>
            <person name="Okada M."/>
            <person name="Plessy C."/>
            <person name="Shibata K."/>
            <person name="Shiraki T."/>
            <person name="Suzuki S."/>
            <person name="Tagami M."/>
            <person name="Waki K."/>
            <person name="Watahiki A."/>
            <person name="Okamura-Oho Y."/>
            <person name="Suzuki H."/>
            <person name="Kawai J."/>
            <person name="Hayashizaki Y."/>
        </authorList>
    </citation>
    <scope>NUCLEOTIDE SEQUENCE [LARGE SCALE MRNA] (ISOFORM 1)</scope>
    <scope>NUCLEOTIDE SEQUENCE [LARGE SCALE MRNA] OF 53-605 (ISOFORMS 1/2)</scope>
    <source>
        <strain evidence="33">C57BL/6J</strain>
        <strain evidence="34">NOD</strain>
        <tissue evidence="33">Blastocyst</tissue>
        <tissue evidence="34">Spleen</tissue>
    </source>
</reference>
<reference evidence="32" key="7">
    <citation type="submission" date="2005-02" db="EMBL/GenBank/DDBJ databases">
        <title>Prediction of the coding sequences of mouse homologues of KIAA gene. The complete nucleotide sequences of mouse KIAA-homologous cDNAs identified by screening of terminal sequences of cDNA clones randomly sampled from size-fractionated libraries.</title>
        <authorList>
            <person name="Okazaki N."/>
            <person name="Kikuno R.F."/>
            <person name="Ohara R."/>
            <person name="Inamoto S."/>
            <person name="Nagase T."/>
            <person name="Ohara O."/>
            <person name="Koga H."/>
        </authorList>
    </citation>
    <scope>NUCLEOTIDE SEQUENCE [LARGE SCALE MRNA] (ISOFORM 1)</scope>
    <source>
        <tissue evidence="32">Brain</tissue>
    </source>
</reference>
<reference evidence="32" key="8">
    <citation type="submission" date="2005-07" db="EMBL/GenBank/DDBJ databases">
        <authorList>
            <person name="Mural R.J."/>
            <person name="Adams M.D."/>
            <person name="Myers E.W."/>
            <person name="Smith H.O."/>
            <person name="Venter J.C."/>
        </authorList>
    </citation>
    <scope>NUCLEOTIDE SEQUENCE [LARGE SCALE GENOMIC DNA]</scope>
</reference>
<reference evidence="30" key="9">
    <citation type="journal article" date="2004" name="Genome Res.">
        <title>The status, quality, and expansion of the NIH full-length cDNA project: the Mammalian Gene Collection (MGC).</title>
        <authorList>
            <consortium name="The MGC Project Team"/>
        </authorList>
    </citation>
    <scope>NUCLEOTIDE SEQUENCE [LARGE SCALE MRNA] (ISOFORM 2)</scope>
    <source>
        <strain evidence="30">Czech II</strain>
        <tissue evidence="30">Mammary tumor</tissue>
    </source>
</reference>
<reference key="10">
    <citation type="journal article" date="2005" name="J. Biol. Chem.">
        <title>SCFbeta-TRCP controls clock-dependent transcription via casein kinase 1-dependent degradation of the mammalian period-1 (Per1) protein.</title>
        <authorList>
            <person name="Shirogane T."/>
            <person name="Jin J."/>
            <person name="Ang X.L."/>
            <person name="Harper J.W."/>
        </authorList>
    </citation>
    <scope>INTERACTION WITH PER3</scope>
</reference>
<reference key="11">
    <citation type="journal article" date="2006" name="Proc. Natl. Acad. Sci. U.S.A.">
        <title>Evidence for the direct involvement of {beta}TrCP in Gli3 protein processing.</title>
        <authorList>
            <person name="Wang B."/>
            <person name="Li Y."/>
        </authorList>
    </citation>
    <scope>FUNCTION</scope>
    <scope>INTERACTION WITH GLI3</scope>
</reference>
<reference key="12">
    <citation type="journal article" date="2008" name="J. Biochem.">
        <title>The role of {beta}-TrCP1 and {beta}-TrCP2 in circadian rhythm generation by mediating degradation of clock protein PER2.</title>
        <authorList>
            <person name="Ohsaki K."/>
            <person name="Oishi K."/>
            <person name="Kozono Y."/>
            <person name="Nakayama K."/>
            <person name="Nakayama K.I."/>
            <person name="Ishida N."/>
        </authorList>
    </citation>
    <scope>FUNCTION IN CIRCADIAN RHYTHMS</scope>
    <scope>INTERACTION WITH PER2</scope>
    <scope>DISRUPTION PHENOTYPE</scope>
</reference>
<reference key="13">
    <citation type="journal article" date="2011" name="Nat. Immunol.">
        <title>The IkappaB kinase complex regulates the stability of cytokine-encoding mRNA induced by TLR-IL-1R by controlling degradation of regnase-1.</title>
        <authorList>
            <person name="Iwasaki H."/>
            <person name="Takeuchi O."/>
            <person name="Teraguchi S."/>
            <person name="Matsushita K."/>
            <person name="Uehata T."/>
            <person name="Kuniyoshi K."/>
            <person name="Satoh T."/>
            <person name="Saitoh T."/>
            <person name="Matsushita M."/>
            <person name="Standley D.M."/>
            <person name="Akira S."/>
        </authorList>
    </citation>
    <scope>INTERACTION WITH ZC3H12A</scope>
</reference>
<reference key="14">
    <citation type="journal article" date="2011" name="Mol. Cell. Biol.">
        <title>Dual regulation of the transcriptional activity of Nrf1 by beta-TrCP- and Hrd1-dependent degradation mechanisms.</title>
        <authorList>
            <person name="Tsuchiya Y."/>
            <person name="Morita T."/>
            <person name="Kim M."/>
            <person name="Iemura S."/>
            <person name="Natsume T."/>
            <person name="Yamamoto M."/>
            <person name="Kobayashi A."/>
        </authorList>
    </citation>
    <scope>FUNCTION</scope>
    <scope>INTERACTION WITH NFE2L1</scope>
</reference>
<reference key="15">
    <citation type="journal article" date="2018" name="Nat. Commun.">
        <title>Klf4 glutamylation is required for cell reprogramming and early embryonic development in mice.</title>
        <authorList>
            <person name="Ye B."/>
            <person name="Liu B."/>
            <person name="Hao L."/>
            <person name="Zhu X."/>
            <person name="Yang L."/>
            <person name="Wang S."/>
            <person name="Xia P."/>
            <person name="Du Y."/>
            <person name="Meng S."/>
            <person name="Huang G."/>
            <person name="Qin X."/>
            <person name="Wang Y."/>
            <person name="Yan X."/>
            <person name="Li C."/>
            <person name="Hao J."/>
            <person name="Zhu P."/>
            <person name="He L."/>
            <person name="Tian Y."/>
            <person name="Fan Z."/>
        </authorList>
    </citation>
    <scope>FUNCTION</scope>
    <scope>PATHWAY</scope>
    <scope>INTERACTION WITH KLF4</scope>
</reference>
<dbReference type="EMBL" id="AF099932">
    <property type="protein sequence ID" value="AAD08701.1"/>
    <property type="molecule type" value="mRNA"/>
</dbReference>
<dbReference type="EMBL" id="AF110396">
    <property type="protein sequence ID" value="AAD41025.1"/>
    <property type="molecule type" value="mRNA"/>
</dbReference>
<dbReference type="EMBL" id="AF112979">
    <property type="protein sequence ID" value="AAD04181.1"/>
    <property type="molecule type" value="mRNA"/>
</dbReference>
<dbReference type="EMBL" id="AF081887">
    <property type="protein sequence ID" value="AAD17755.1"/>
    <property type="molecule type" value="mRNA"/>
</dbReference>
<dbReference type="EMBL" id="AF391190">
    <property type="protein sequence ID" value="AAL40929.1"/>
    <property type="molecule type" value="Genomic_DNA"/>
</dbReference>
<dbReference type="EMBL" id="AF391178">
    <property type="protein sequence ID" value="AAL40929.1"/>
    <property type="status" value="JOINED"/>
    <property type="molecule type" value="Genomic_DNA"/>
</dbReference>
<dbReference type="EMBL" id="AF391179">
    <property type="protein sequence ID" value="AAL40929.1"/>
    <property type="status" value="JOINED"/>
    <property type="molecule type" value="Genomic_DNA"/>
</dbReference>
<dbReference type="EMBL" id="AF391180">
    <property type="protein sequence ID" value="AAL40929.1"/>
    <property type="status" value="JOINED"/>
    <property type="molecule type" value="Genomic_DNA"/>
</dbReference>
<dbReference type="EMBL" id="AF391181">
    <property type="protein sequence ID" value="AAL40929.1"/>
    <property type="status" value="JOINED"/>
    <property type="molecule type" value="Genomic_DNA"/>
</dbReference>
<dbReference type="EMBL" id="AF391182">
    <property type="protein sequence ID" value="AAL40929.1"/>
    <property type="status" value="JOINED"/>
    <property type="molecule type" value="Genomic_DNA"/>
</dbReference>
<dbReference type="EMBL" id="AF391183">
    <property type="protein sequence ID" value="AAL40929.1"/>
    <property type="status" value="JOINED"/>
    <property type="molecule type" value="Genomic_DNA"/>
</dbReference>
<dbReference type="EMBL" id="AF391184">
    <property type="protein sequence ID" value="AAL40929.1"/>
    <property type="status" value="JOINED"/>
    <property type="molecule type" value="Genomic_DNA"/>
</dbReference>
<dbReference type="EMBL" id="AF391185">
    <property type="protein sequence ID" value="AAL40929.1"/>
    <property type="status" value="JOINED"/>
    <property type="molecule type" value="Genomic_DNA"/>
</dbReference>
<dbReference type="EMBL" id="AF391186">
    <property type="protein sequence ID" value="AAL40929.1"/>
    <property type="status" value="JOINED"/>
    <property type="molecule type" value="Genomic_DNA"/>
</dbReference>
<dbReference type="EMBL" id="AF391187">
    <property type="protein sequence ID" value="AAL40929.1"/>
    <property type="status" value="JOINED"/>
    <property type="molecule type" value="Genomic_DNA"/>
</dbReference>
<dbReference type="EMBL" id="AF391188">
    <property type="protein sequence ID" value="AAL40929.1"/>
    <property type="status" value="JOINED"/>
    <property type="molecule type" value="Genomic_DNA"/>
</dbReference>
<dbReference type="EMBL" id="AF391189">
    <property type="protein sequence ID" value="AAL40929.1"/>
    <property type="status" value="JOINED"/>
    <property type="molecule type" value="Genomic_DNA"/>
</dbReference>
<dbReference type="EMBL" id="AK145624">
    <property type="protein sequence ID" value="BAE26547.1"/>
    <property type="molecule type" value="mRNA"/>
</dbReference>
<dbReference type="EMBL" id="AK156660">
    <property type="protein sequence ID" value="BAE33798.1"/>
    <property type="molecule type" value="mRNA"/>
</dbReference>
<dbReference type="EMBL" id="AK220183">
    <property type="protein sequence ID" value="BAD90368.1"/>
    <property type="status" value="ALT_INIT"/>
    <property type="molecule type" value="mRNA"/>
</dbReference>
<dbReference type="EMBL" id="CH466534">
    <property type="protein sequence ID" value="EDL41951.1"/>
    <property type="molecule type" value="Genomic_DNA"/>
</dbReference>
<dbReference type="EMBL" id="BC003989">
    <property type="protein sequence ID" value="AAH03989.1"/>
    <property type="molecule type" value="mRNA"/>
</dbReference>
<dbReference type="CCDS" id="CCDS29860.1">
    <molecule id="Q3ULA2-1"/>
</dbReference>
<dbReference type="CCDS" id="CCDS38002.1">
    <molecule id="Q3ULA2-2"/>
</dbReference>
<dbReference type="RefSeq" id="NP_001032847.2">
    <molecule id="Q3ULA2-1"/>
    <property type="nucleotide sequence ID" value="NM_001037758.2"/>
</dbReference>
<dbReference type="RefSeq" id="NP_001273394.1">
    <molecule id="Q3ULA2-1"/>
    <property type="nucleotide sequence ID" value="NM_001286465.1"/>
</dbReference>
<dbReference type="RefSeq" id="NP_001273395.1">
    <property type="nucleotide sequence ID" value="NM_001286466.1"/>
</dbReference>
<dbReference type="RefSeq" id="NP_033901.1">
    <molecule id="Q3ULA2-2"/>
    <property type="nucleotide sequence ID" value="NM_009771.3"/>
</dbReference>
<dbReference type="SMR" id="Q3ULA2"/>
<dbReference type="BioGRID" id="198403">
    <property type="interactions" value="59"/>
</dbReference>
<dbReference type="CORUM" id="Q3ULA2"/>
<dbReference type="FunCoup" id="Q3ULA2">
    <property type="interactions" value="3134"/>
</dbReference>
<dbReference type="IntAct" id="Q3ULA2">
    <property type="interactions" value="17"/>
</dbReference>
<dbReference type="MINT" id="Q3ULA2"/>
<dbReference type="STRING" id="10090.ENSMUSP00000070728"/>
<dbReference type="iPTMnet" id="Q3ULA2"/>
<dbReference type="PhosphoSitePlus" id="Q3ULA2"/>
<dbReference type="PaxDb" id="10090-ENSMUSP00000070728"/>
<dbReference type="PeptideAtlas" id="Q3ULA2"/>
<dbReference type="ProteomicsDB" id="267717">
    <molecule id="Q3ULA2-1"/>
</dbReference>
<dbReference type="ProteomicsDB" id="267718">
    <molecule id="Q3ULA2-2"/>
</dbReference>
<dbReference type="Antibodypedia" id="31277">
    <property type="antibodies" value="390 antibodies from 32 providers"/>
</dbReference>
<dbReference type="DNASU" id="12234"/>
<dbReference type="Ensembl" id="ENSMUST00000065601.13">
    <molecule id="Q3ULA2-1"/>
    <property type="protein sequence ID" value="ENSMUSP00000070728.6"/>
    <property type="gene ID" value="ENSMUSG00000025217.16"/>
</dbReference>
<dbReference type="Ensembl" id="ENSMUST00000111936.4">
    <molecule id="Q3ULA2-2"/>
    <property type="protein sequence ID" value="ENSMUSP00000107567.3"/>
    <property type="gene ID" value="ENSMUSG00000025217.16"/>
</dbReference>
<dbReference type="GeneID" id="12234"/>
<dbReference type="KEGG" id="mmu:12234"/>
<dbReference type="UCSC" id="uc008hqx.2">
    <molecule id="Q3ULA2-1"/>
    <property type="organism name" value="mouse"/>
</dbReference>
<dbReference type="UCSC" id="uc008hqz.2">
    <molecule id="Q3ULA2-2"/>
    <property type="organism name" value="mouse"/>
</dbReference>
<dbReference type="AGR" id="MGI:1338871"/>
<dbReference type="CTD" id="8945"/>
<dbReference type="MGI" id="MGI:1338871">
    <property type="gene designation" value="Btrc"/>
</dbReference>
<dbReference type="VEuPathDB" id="HostDB:ENSMUSG00000025217"/>
<dbReference type="eggNOG" id="KOG0281">
    <property type="taxonomic scope" value="Eukaryota"/>
</dbReference>
<dbReference type="GeneTree" id="ENSGT00940000159672"/>
<dbReference type="HOGENOM" id="CLU_000288_103_6_1"/>
<dbReference type="InParanoid" id="Q3ULA2"/>
<dbReference type="OMA" id="GIAHVWS"/>
<dbReference type="OrthoDB" id="19711at2759"/>
<dbReference type="PhylomeDB" id="Q3ULA2"/>
<dbReference type="TreeFam" id="TF105679"/>
<dbReference type="UniPathway" id="UPA00143"/>
<dbReference type="BioGRID-ORCS" id="12234">
    <property type="hits" value="0 hits in 79 CRISPR screens"/>
</dbReference>
<dbReference type="ChiTaRS" id="Btrc">
    <property type="organism name" value="mouse"/>
</dbReference>
<dbReference type="PRO" id="PR:Q3ULA2"/>
<dbReference type="Proteomes" id="UP000000589">
    <property type="component" value="Chromosome 19"/>
</dbReference>
<dbReference type="RNAct" id="Q3ULA2">
    <property type="molecule type" value="protein"/>
</dbReference>
<dbReference type="Bgee" id="ENSMUSG00000025217">
    <property type="expression patterns" value="Expressed in spermatocyte and 242 other cell types or tissues"/>
</dbReference>
<dbReference type="ExpressionAtlas" id="Q3ULA2">
    <property type="expression patterns" value="baseline and differential"/>
</dbReference>
<dbReference type="GO" id="GO:0005737">
    <property type="term" value="C:cytoplasm"/>
    <property type="evidence" value="ECO:0000314"/>
    <property type="project" value="ParkinsonsUK-UCL"/>
</dbReference>
<dbReference type="GO" id="GO:0005829">
    <property type="term" value="C:cytosol"/>
    <property type="evidence" value="ECO:0000304"/>
    <property type="project" value="Reactome"/>
</dbReference>
<dbReference type="GO" id="GO:0005634">
    <property type="term" value="C:nucleus"/>
    <property type="evidence" value="ECO:0000314"/>
    <property type="project" value="ParkinsonsUK-UCL"/>
</dbReference>
<dbReference type="GO" id="GO:0019005">
    <property type="term" value="C:SCF ubiquitin ligase complex"/>
    <property type="evidence" value="ECO:0000250"/>
    <property type="project" value="UniProtKB"/>
</dbReference>
<dbReference type="GO" id="GO:0008013">
    <property type="term" value="F:beta-catenin binding"/>
    <property type="evidence" value="ECO:0000314"/>
    <property type="project" value="BHF-UCL"/>
</dbReference>
<dbReference type="GO" id="GO:0046983">
    <property type="term" value="F:protein dimerization activity"/>
    <property type="evidence" value="ECO:0007669"/>
    <property type="project" value="InterPro"/>
</dbReference>
<dbReference type="GO" id="GO:0045309">
    <property type="term" value="F:protein phosphorylated amino acid binding"/>
    <property type="evidence" value="ECO:0000314"/>
    <property type="project" value="BHF-UCL"/>
</dbReference>
<dbReference type="GO" id="GO:1990757">
    <property type="term" value="F:ubiquitin ligase activator activity"/>
    <property type="evidence" value="ECO:0007669"/>
    <property type="project" value="Ensembl"/>
</dbReference>
<dbReference type="GO" id="GO:0061630">
    <property type="term" value="F:ubiquitin protein ligase activity"/>
    <property type="evidence" value="ECO:0000314"/>
    <property type="project" value="BHF-UCL"/>
</dbReference>
<dbReference type="GO" id="GO:1990756">
    <property type="term" value="F:ubiquitin-like ligase-substrate adaptor activity"/>
    <property type="evidence" value="ECO:0000250"/>
    <property type="project" value="UniProtKB"/>
</dbReference>
<dbReference type="GO" id="GO:0004842">
    <property type="term" value="F:ubiquitin-protein transferase activity"/>
    <property type="evidence" value="ECO:0000304"/>
    <property type="project" value="Reactome"/>
</dbReference>
<dbReference type="GO" id="GO:0060444">
    <property type="term" value="P:branching involved in mammary gland duct morphogenesis"/>
    <property type="evidence" value="ECO:0000315"/>
    <property type="project" value="MGI"/>
</dbReference>
<dbReference type="GO" id="GO:0033598">
    <property type="term" value="P:mammary gland epithelial cell proliferation"/>
    <property type="evidence" value="ECO:0000315"/>
    <property type="project" value="MGI"/>
</dbReference>
<dbReference type="GO" id="GO:0050860">
    <property type="term" value="P:negative regulation of T cell receptor signaling pathway"/>
    <property type="evidence" value="ECO:0007669"/>
    <property type="project" value="Ensembl"/>
</dbReference>
<dbReference type="GO" id="GO:0038061">
    <property type="term" value="P:non-canonical NF-kappaB signal transduction"/>
    <property type="evidence" value="ECO:0007669"/>
    <property type="project" value="Ensembl"/>
</dbReference>
<dbReference type="GO" id="GO:0042753">
    <property type="term" value="P:positive regulation of circadian rhythm"/>
    <property type="evidence" value="ECO:0000315"/>
    <property type="project" value="UniProtKB"/>
</dbReference>
<dbReference type="GO" id="GO:0045893">
    <property type="term" value="P:positive regulation of DNA-templated transcription"/>
    <property type="evidence" value="ECO:0000315"/>
    <property type="project" value="UniProtKB"/>
</dbReference>
<dbReference type="GO" id="GO:0045862">
    <property type="term" value="P:positive regulation of proteolysis"/>
    <property type="evidence" value="ECO:0000250"/>
    <property type="project" value="UniProtKB"/>
</dbReference>
<dbReference type="GO" id="GO:0043161">
    <property type="term" value="P:proteasome-mediated ubiquitin-dependent protein catabolic process"/>
    <property type="evidence" value="ECO:0000250"/>
    <property type="project" value="UniProtKB"/>
</dbReference>
<dbReference type="GO" id="GO:0030163">
    <property type="term" value="P:protein catabolic process"/>
    <property type="evidence" value="ECO:0000315"/>
    <property type="project" value="MGI"/>
</dbReference>
<dbReference type="GO" id="GO:0006470">
    <property type="term" value="P:protein dephosphorylation"/>
    <property type="evidence" value="ECO:0000314"/>
    <property type="project" value="UniProtKB"/>
</dbReference>
<dbReference type="GO" id="GO:0031648">
    <property type="term" value="P:protein destabilization"/>
    <property type="evidence" value="ECO:0000250"/>
    <property type="project" value="UniProtKB"/>
</dbReference>
<dbReference type="GO" id="GO:0070936">
    <property type="term" value="P:protein K48-linked ubiquitination"/>
    <property type="evidence" value="ECO:0000314"/>
    <property type="project" value="MGI"/>
</dbReference>
<dbReference type="GO" id="GO:0000209">
    <property type="term" value="P:protein polyubiquitination"/>
    <property type="evidence" value="ECO:0000314"/>
    <property type="project" value="BHF-UCL"/>
</dbReference>
<dbReference type="GO" id="GO:0016567">
    <property type="term" value="P:protein ubiquitination"/>
    <property type="evidence" value="ECO:0000314"/>
    <property type="project" value="MGI"/>
</dbReference>
<dbReference type="GO" id="GO:0043122">
    <property type="term" value="P:regulation of canonical NF-kappaB signal transduction"/>
    <property type="evidence" value="ECO:0000315"/>
    <property type="project" value="MGI"/>
</dbReference>
<dbReference type="GO" id="GO:0060828">
    <property type="term" value="P:regulation of canonical Wnt signaling pathway"/>
    <property type="evidence" value="ECO:0000314"/>
    <property type="project" value="ParkinsonsUK-UCL"/>
</dbReference>
<dbReference type="GO" id="GO:0051726">
    <property type="term" value="P:regulation of cell cycle"/>
    <property type="evidence" value="ECO:0000315"/>
    <property type="project" value="MGI"/>
</dbReference>
<dbReference type="GO" id="GO:0042752">
    <property type="term" value="P:regulation of circadian rhythm"/>
    <property type="evidence" value="ECO:0000250"/>
    <property type="project" value="UniProtKB"/>
</dbReference>
<dbReference type="GO" id="GO:0061136">
    <property type="term" value="P:regulation of proteasomal protein catabolic process"/>
    <property type="evidence" value="ECO:0000314"/>
    <property type="project" value="MGI"/>
</dbReference>
<dbReference type="GO" id="GO:0048511">
    <property type="term" value="P:rhythmic process"/>
    <property type="evidence" value="ECO:0007669"/>
    <property type="project" value="UniProtKB-KW"/>
</dbReference>
<dbReference type="GO" id="GO:0031146">
    <property type="term" value="P:SCF-dependent proteasomal ubiquitin-dependent protein catabolic process"/>
    <property type="evidence" value="ECO:0000314"/>
    <property type="project" value="UniProtKB"/>
</dbReference>
<dbReference type="GO" id="GO:0006511">
    <property type="term" value="P:ubiquitin-dependent protein catabolic process"/>
    <property type="evidence" value="ECO:0000250"/>
    <property type="project" value="UniProtKB"/>
</dbReference>
<dbReference type="GO" id="GO:0016055">
    <property type="term" value="P:Wnt signaling pathway"/>
    <property type="evidence" value="ECO:0007669"/>
    <property type="project" value="UniProtKB-KW"/>
</dbReference>
<dbReference type="CDD" id="cd22182">
    <property type="entry name" value="F-box_FBXW1A"/>
    <property type="match status" value="1"/>
</dbReference>
<dbReference type="CDD" id="cd00200">
    <property type="entry name" value="WD40"/>
    <property type="match status" value="1"/>
</dbReference>
<dbReference type="FunFam" id="1.20.1280.50:FF:000001">
    <property type="entry name" value="F-box/WD repeat-containing protein 11 isoform X2"/>
    <property type="match status" value="1"/>
</dbReference>
<dbReference type="FunFam" id="2.130.10.10:FF:000004">
    <property type="entry name" value="F-box/WD repeat-containing protein 11 isoform X2"/>
    <property type="match status" value="1"/>
</dbReference>
<dbReference type="Gene3D" id="1.20.1280.50">
    <property type="match status" value="1"/>
</dbReference>
<dbReference type="Gene3D" id="6.10.250.1840">
    <property type="match status" value="1"/>
</dbReference>
<dbReference type="Gene3D" id="2.130.10.10">
    <property type="entry name" value="YVTN repeat-like/Quinoprotein amine dehydrogenase"/>
    <property type="match status" value="1"/>
</dbReference>
<dbReference type="InterPro" id="IPR021977">
    <property type="entry name" value="Beta-TrCP_D"/>
</dbReference>
<dbReference type="InterPro" id="IPR036047">
    <property type="entry name" value="F-box-like_dom_sf"/>
</dbReference>
<dbReference type="InterPro" id="IPR001810">
    <property type="entry name" value="F-box_dom"/>
</dbReference>
<dbReference type="InterPro" id="IPR020472">
    <property type="entry name" value="G-protein_beta_WD-40_rep"/>
</dbReference>
<dbReference type="InterPro" id="IPR050995">
    <property type="entry name" value="WD-F-box_domain-protein"/>
</dbReference>
<dbReference type="InterPro" id="IPR015943">
    <property type="entry name" value="WD40/YVTN_repeat-like_dom_sf"/>
</dbReference>
<dbReference type="InterPro" id="IPR019775">
    <property type="entry name" value="WD40_repeat_CS"/>
</dbReference>
<dbReference type="InterPro" id="IPR036322">
    <property type="entry name" value="WD40_repeat_dom_sf"/>
</dbReference>
<dbReference type="InterPro" id="IPR001680">
    <property type="entry name" value="WD40_rpt"/>
</dbReference>
<dbReference type="PANTHER" id="PTHR14604:SF5">
    <property type="entry name" value="F-BOX_WD REPEAT-CONTAINING PROTEIN 1A"/>
    <property type="match status" value="1"/>
</dbReference>
<dbReference type="PANTHER" id="PTHR14604">
    <property type="entry name" value="WD40 REPEAT PF20"/>
    <property type="match status" value="1"/>
</dbReference>
<dbReference type="Pfam" id="PF12125">
    <property type="entry name" value="Beta-TrCP_D"/>
    <property type="match status" value="1"/>
</dbReference>
<dbReference type="Pfam" id="PF12937">
    <property type="entry name" value="F-box-like"/>
    <property type="match status" value="1"/>
</dbReference>
<dbReference type="Pfam" id="PF00400">
    <property type="entry name" value="WD40"/>
    <property type="match status" value="7"/>
</dbReference>
<dbReference type="PRINTS" id="PR00320">
    <property type="entry name" value="GPROTEINBRPT"/>
</dbReference>
<dbReference type="SMART" id="SM01028">
    <property type="entry name" value="Beta-TrCP_D"/>
    <property type="match status" value="1"/>
</dbReference>
<dbReference type="SMART" id="SM00256">
    <property type="entry name" value="FBOX"/>
    <property type="match status" value="1"/>
</dbReference>
<dbReference type="SMART" id="SM00320">
    <property type="entry name" value="WD40"/>
    <property type="match status" value="7"/>
</dbReference>
<dbReference type="SUPFAM" id="SSF81383">
    <property type="entry name" value="F-box domain"/>
    <property type="match status" value="1"/>
</dbReference>
<dbReference type="SUPFAM" id="SSF50978">
    <property type="entry name" value="WD40 repeat-like"/>
    <property type="match status" value="1"/>
</dbReference>
<dbReference type="PROSITE" id="PS50181">
    <property type="entry name" value="FBOX"/>
    <property type="match status" value="1"/>
</dbReference>
<dbReference type="PROSITE" id="PS00678">
    <property type="entry name" value="WD_REPEATS_1"/>
    <property type="match status" value="6"/>
</dbReference>
<dbReference type="PROSITE" id="PS50082">
    <property type="entry name" value="WD_REPEATS_2"/>
    <property type="match status" value="7"/>
</dbReference>
<dbReference type="PROSITE" id="PS50294">
    <property type="entry name" value="WD_REPEATS_REGION"/>
    <property type="match status" value="1"/>
</dbReference>
<evidence type="ECO:0000250" key="1"/>
<evidence type="ECO:0000250" key="2">
    <source>
        <dbReference type="UniProtKB" id="Q9Y297"/>
    </source>
</evidence>
<evidence type="ECO:0000255" key="3"/>
<evidence type="ECO:0000255" key="4">
    <source>
        <dbReference type="PROSITE-ProRule" id="PRU00080"/>
    </source>
</evidence>
<evidence type="ECO:0000269" key="5">
    <source>
    </source>
</evidence>
<evidence type="ECO:0000269" key="6">
    <source>
    </source>
</evidence>
<evidence type="ECO:0000269" key="7">
    <source>
    </source>
</evidence>
<evidence type="ECO:0000269" key="8">
    <source>
    </source>
</evidence>
<evidence type="ECO:0000269" key="9">
    <source>
    </source>
</evidence>
<evidence type="ECO:0000269" key="10">
    <source>
    </source>
</evidence>
<evidence type="ECO:0000269" key="11">
    <source>
    </source>
</evidence>
<evidence type="ECO:0000269" key="12">
    <source>
    </source>
</evidence>
<evidence type="ECO:0000269" key="13">
    <source>
    </source>
</evidence>
<evidence type="ECO:0000269" key="14">
    <source>
    </source>
</evidence>
<evidence type="ECO:0000269" key="15">
    <source>
    </source>
</evidence>
<evidence type="ECO:0000269" key="16">
    <source>
    </source>
</evidence>
<evidence type="ECO:0000269" key="17">
    <source>
    </source>
</evidence>
<evidence type="ECO:0000269" key="18">
    <source ref="7"/>
</evidence>
<evidence type="ECO:0000303" key="19">
    <source>
    </source>
</evidence>
<evidence type="ECO:0000303" key="20">
    <source>
    </source>
</evidence>
<evidence type="ECO:0000303" key="21">
    <source>
    </source>
</evidence>
<evidence type="ECO:0000303" key="22">
    <source>
    </source>
</evidence>
<evidence type="ECO:0000303" key="23">
    <source>
    </source>
</evidence>
<evidence type="ECO:0000303" key="24">
    <source>
    </source>
</evidence>
<evidence type="ECO:0000305" key="25"/>
<evidence type="ECO:0000312" key="26">
    <source>
        <dbReference type="EMBL" id="AAD04181.1"/>
    </source>
</evidence>
<evidence type="ECO:0000312" key="27">
    <source>
        <dbReference type="EMBL" id="AAD08701.1"/>
    </source>
</evidence>
<evidence type="ECO:0000312" key="28">
    <source>
        <dbReference type="EMBL" id="AAD17755.1"/>
    </source>
</evidence>
<evidence type="ECO:0000312" key="29">
    <source>
        <dbReference type="EMBL" id="AAD41025.1"/>
    </source>
</evidence>
<evidence type="ECO:0000312" key="30">
    <source>
        <dbReference type="EMBL" id="AAH03989.1"/>
    </source>
</evidence>
<evidence type="ECO:0000312" key="31">
    <source>
        <dbReference type="EMBL" id="AAL40929.1"/>
    </source>
</evidence>
<evidence type="ECO:0000312" key="32">
    <source>
        <dbReference type="EMBL" id="BAD90368.1"/>
    </source>
</evidence>
<evidence type="ECO:0000312" key="33">
    <source>
        <dbReference type="EMBL" id="BAE26547.1"/>
    </source>
</evidence>
<evidence type="ECO:0000312" key="34">
    <source>
        <dbReference type="EMBL" id="BAE33798.1"/>
    </source>
</evidence>
<evidence type="ECO:0000312" key="35">
    <source>
        <dbReference type="MGI" id="MGI:1338871"/>
    </source>
</evidence>
<accession>Q3ULA2</accession>
<accession>Q3U0Q4</accession>
<accession>Q571K6</accession>
<accession>Q9QUI5</accession>
<accession>Q9R1G7</accession>
<accession>Q9Z159</accession>
<keyword id="KW-0025">Alternative splicing</keyword>
<keyword id="KW-0090">Biological rhythms</keyword>
<keyword id="KW-0963">Cytoplasm</keyword>
<keyword id="KW-0539">Nucleus</keyword>
<keyword id="KW-1185">Reference proteome</keyword>
<keyword id="KW-0677">Repeat</keyword>
<keyword id="KW-0832">Ubl conjugation</keyword>
<keyword id="KW-0833">Ubl conjugation pathway</keyword>
<keyword id="KW-0853">WD repeat</keyword>
<keyword id="KW-0879">Wnt signaling pathway</keyword>
<sequence>MDPAEAVLQEKALKFMCSMPRSLWLGCSSLADSMPSLRCLYNPGTGALTAFQNSSEREDCNNGEPPRKIIPEKNSLRQTYNSCARLCINQETVCLTSTAMKTENCVAKAKLANGTSSMIVPKQRKLSASYEKEKELCVKYFEQWSESDQVEFVEHLISQMCHYQHGHINSYLKPMLQRDFITALPARGLDHIAENILSYLDAKSLCAAELVCKEWYRVTSDGMLWKKLIERMVRTDSLWRGLAERRGWGQYLFKNKPPDENAPPNSFYRALYPKIIQDIETIESNWRCGRHSLQRIHCRSETSKGVYCLQYDDQKIVSGLRDNTIKIWDKSTLECKRILTGHTGSVLCLQYDERVIITGSSDSTVRVWDVNAGEMLNTLIHHCEAVLHLRFNNGMMVTCSKDRSIAVWDMASPTDITLRRVLVGHRAAVNVVDFDDKYIVSASGDRTIKVWNTSTCEFVRTLNGHKRGIACLQYRDRLVVSGSSDNTIRLWDIECGACLRVLEGHEELVRCIRFDNKRIVSGAYDGKIKVWDLMAALDPRAPAGTLCLRTLVEHSGRVFRLQFDEFQIVSSSHDDTILIWDFLNDPAAHAEPPRSPSRTYTYISR</sequence>
<comment type="function">
    <text evidence="2 5 11 12 13 15 16 17">Substrate recognition component of a SCF (SKP1-CUL1-F-box protein) E3 ubiquitin-protein ligase complex which mediates the ubiquitination and subsequent proteasomal degradation of target proteins (PubMed:10097128, PubMed:16371461, PubMed:18782782, PubMed:21911472, PubMed:29593216, PubMed:9859996, PubMed:9990853). Recognizes and binds to phosphorylated target proteins (PubMed:10097128, PubMed:16371461, PubMed:18782782, PubMed:21911472, PubMed:9859996, PubMed:9990853). SCF(BTRC) mediates the ubiquitination of phosphorylated NFKB, ATF4, CDC25A, DLG1, FBXO5, PER1, SMAD3, SMAD4, SNAI1 and probably NFKB2. SCF(BTRC) mediates the ubiquitination of CTNNB1 and participates in Wnt signaling (By similarity). SCF(BTRC) mediates the ubiquitination of NFKBIA, NFKBIB and NFKBIE; the degradation frees the associated NFKB1 to translocate into the nucleus and to activate transcription (PubMed:10097128, PubMed:9859996). Ubiquitination of NFKBIA occurs at 'Lys-21' and 'Lys-22' (PubMed:10097128, PubMed:9859996). The SCF(FBXW11) complex also regulates NF-kappa-B by mediating ubiquitination of phosphorylated NFKB1: specifically ubiquitinates the p105 form of NFKB1, leading to its degradation (By similarity). SCF(BTRC) mediates the ubiquitination of CEP68; this is required for centriole separation during mitosis (By similarity). SCF(BTRC) mediates the ubiquitination and subsequent degradation of nuclear NFE2L1 (PubMed:21911472). Has an essential role in the control of the clock-dependent transcription via degradation of phosphorylated PER1 and PER2 (PubMed:18782782). May be involved in ubiquitination and subsequent proteasomal degradation through a DBB1-CUL4 E3 ubiquitin-protein ligase (By similarity). Required for activation of NFKB-mediated transcription by IL1B, MAP3K14, MAP3K1, IKBKB and TNF (By similarity). Required for proteolytic processing of GLI3 (PubMed:16371461). Mediates ubiquitination of REST, thereby leading to its proteasomal degradation (By similarity). SCF(BTRC) mediates the ubiquitination and subsequent proteasomal degradation of KLF4; thereby negatively regulating cell pluripotency maintenance and embryogenesis (PubMed:29593216). SCF(BTRC) acts as a regulator of mTORC1 signaling pathway by catalyzing ubiquitination and subsequent proteasomal degradation of phosphorylated DEPTOR, TFE3 and MITF (By similarity). SCF(BTRC) directs 'Lys-48'-linked ubiquitination of UBR2 in the T-cell receptor signaling pathway (By similarity).</text>
</comment>
<comment type="pathway">
    <text evidence="5 13 15 16 17">Protein modification; protein ubiquitination.</text>
</comment>
<comment type="subunit">
    <text evidence="2 5 7 9 11 12 13 14 15 16 17">Homodimer. Self-associates. Component of the SCF(BTRC) complex, composed of SKP1, CUL1 and BTRC. Direct interaction with SKP1 with SKP1 occurs via the F-box domain. Interacts with phosphorylated ubiquitination substrates SMAD3 and SMAD4. Interacts with phosphorylated ubiquitination substrates CTNNB1, NFKBIA, NFKBIB, NFKBIE, NFKB1/nuclear factor NF-kappa-B p105 subunit, ATF4, CDC25A, DLG1, FBXO5 and SNAI1; the interaction requires the phosphorylation of the 2 serine residues in the substrate destruction motif D-S-G-X(2,3,4)-S. Binds UBQLN1. Interacts with CDC34 and UBE2R2. Interacts with FBXW11. Interacts with CUL4A and DDB1. Part of a SCF(BTRC)-like complex lacking CUL1, which is associated with phosphorylated NKBIA and RELA; RELA interacts directly with NFKBIA. Interacts with the phosphorylated form of GLI3. Interacts with CLU. Interacts with PER1 (phosphorylated), PER2 (phosphorylated) and PER3. Interacts with phosphorylated ubiquitination substrate CEP68 (By similarity). Interacts with ZC3H12A; this interaction occurs when ZC3H12A is phosphorylated in a IKBKB/IKKB-dependent manner (PubMed:22037600). Interacts with HSF1; this interaction occurs during mitosis and induces HSF1 ubiquitin-dependent degradation, a process inhibited by CDC20 (By similarity). Interacts with NFE2L1 (PubMed:21911472). Interacts with INAVA (By similarity). Interacts with IL10RA; this interaction leads to IL10RA ubiquitination and subsequent degradation (By similarity). Interacts with REST (By similarity). Interacts with KLF4; this interaction leads to KLF4 ubiquitination and subsequent degradation (PubMed:29593216). Interacts with UBR2, as part of a SCF(BTRC) complex; the interaction mediates 'Lys-48'-linked ubiquitination of UBR2 and is regulated by DUSP22 in the T-cell receptor signaling pathway (By similarity).</text>
</comment>
<comment type="subcellular location">
    <subcellularLocation>
        <location evidence="7">Cytoplasm</location>
    </subcellularLocation>
    <subcellularLocation>
        <location evidence="7">Nucleus</location>
    </subcellularLocation>
</comment>
<comment type="alternative products">
    <event type="alternative splicing"/>
    <isoform>
        <id>Q3ULA2-1</id>
        <name evidence="10 18">1</name>
        <sequence type="displayed"/>
    </isoform>
    <isoform>
        <id>Q3ULA2-2</id>
        <name evidence="5 6 8 16 17">2</name>
        <sequence type="described" ref="VSP_053208"/>
    </isoform>
</comment>
<comment type="tissue specificity">
    <text evidence="7">Expressed in heart, brain, liver, skeletal muscle and, most strongly, in testis.</text>
</comment>
<comment type="domain">
    <text evidence="2">The N-terminal D domain mediates homodimerization.</text>
</comment>
<comment type="PTM">
    <text evidence="2">Ubiquitinated via 'Lys-11'-linked polyubiquitin by some cullin-5-RING E3 ubiquitin-protein ligase complex (ECS complex), leading to its degradation. Deubiquitinated by OTUD5, promoting its stability.</text>
</comment>
<comment type="disruption phenotype">
    <text evidence="12">Mutants have normal circadian behavior with normal PER2 expression in the suprachiasmatic nucleus.</text>
</comment>
<comment type="caution">
    <text evidence="25">PubMed:10531037 wrongly lists the species as human.</text>
</comment>
<comment type="sequence caution" evidence="25">
    <conflict type="erroneous initiation">
        <sequence resource="EMBL-CDS" id="BAD90368"/>
    </conflict>
    <text>Extended N-terminus.</text>
</comment>
<protein>
    <recommendedName>
        <fullName evidence="2 31">F-box/WD repeat-containing protein 1A</fullName>
    </recommendedName>
    <alternativeName>
        <fullName evidence="27">Beta-TrCP protein E3RS-IkappaB</fullName>
    </alternativeName>
    <alternativeName>
        <fullName evidence="33">Beta-transducin repeat-containing protein</fullName>
        <shortName evidence="24">Beta-TrCP</shortName>
    </alternativeName>
    <alternativeName>
        <fullName evidence="2">E3RSIkappaB</fullName>
        <shortName evidence="23">mE3RS-IkappaB</shortName>
    </alternativeName>
    <alternativeName>
        <fullName evidence="2">F-box and WD repeats protein beta-TrCP</fullName>
    </alternativeName>
    <alternativeName>
        <fullName evidence="21">HOS</fullName>
    </alternativeName>
    <alternativeName>
        <fullName evidence="19 28">Ubiquitin ligase FWD1</fullName>
    </alternativeName>
    <alternativeName>
        <fullName evidence="23">pIkappaB-E3 receptor subunit</fullName>
    </alternativeName>
</protein>
<organism>
    <name type="scientific">Mus musculus</name>
    <name type="common">Mouse</name>
    <dbReference type="NCBI Taxonomy" id="10090"/>
    <lineage>
        <taxon>Eukaryota</taxon>
        <taxon>Metazoa</taxon>
        <taxon>Chordata</taxon>
        <taxon>Craniata</taxon>
        <taxon>Vertebrata</taxon>
        <taxon>Euteleostomi</taxon>
        <taxon>Mammalia</taxon>
        <taxon>Eutheria</taxon>
        <taxon>Euarchontoglires</taxon>
        <taxon>Glires</taxon>
        <taxon>Rodentia</taxon>
        <taxon>Myomorpha</taxon>
        <taxon>Muroidea</taxon>
        <taxon>Muridae</taxon>
        <taxon>Murinae</taxon>
        <taxon>Mus</taxon>
        <taxon>Mus</taxon>
    </lineage>
</organism>
<gene>
    <name evidence="35" type="primary">Btrc</name>
    <name type="synonym">Fbw1</name>
    <name evidence="31" type="synonym">Fbxw1</name>
    <name type="synonym">Fwd1</name>
    <name type="synonym">Kiaa4123</name>
</gene>
<proteinExistence type="evidence at protein level"/>
<feature type="chain" id="PRO_0000393571" description="F-box/WD repeat-containing protein 1A">
    <location>
        <begin position="1"/>
        <end position="605"/>
    </location>
</feature>
<feature type="domain" description="F-box" evidence="4">
    <location>
        <begin position="182"/>
        <end position="228"/>
    </location>
</feature>
<feature type="repeat" description="WD 1" evidence="3">
    <location>
        <begin position="301"/>
        <end position="338"/>
    </location>
</feature>
<feature type="repeat" description="WD 2" evidence="3">
    <location>
        <begin position="341"/>
        <end position="378"/>
    </location>
</feature>
<feature type="repeat" description="WD 3" evidence="3">
    <location>
        <begin position="381"/>
        <end position="418"/>
    </location>
</feature>
<feature type="repeat" description="WD 4" evidence="3">
    <location>
        <begin position="424"/>
        <end position="461"/>
    </location>
</feature>
<feature type="repeat" description="WD 5" evidence="3">
    <location>
        <begin position="464"/>
        <end position="503"/>
    </location>
</feature>
<feature type="repeat" description="WD 6" evidence="3">
    <location>
        <begin position="505"/>
        <end position="541"/>
    </location>
</feature>
<feature type="repeat" description="WD 7" evidence="3">
    <location>
        <begin position="553"/>
        <end position="590"/>
    </location>
</feature>
<feature type="region of interest" description="Homodimerization domain D" evidence="1">
    <location>
        <begin position="128"/>
        <end position="177"/>
    </location>
</feature>
<feature type="region of interest" description="Required for down-regulation of SNAI1" evidence="1">
    <location>
        <begin position="190"/>
        <end position="228"/>
    </location>
</feature>
<feature type="splice variant" id="VSP_053208" description="In isoform 2." evidence="19 20 22 23 24">
    <location>
        <begin position="17"/>
        <end position="52"/>
    </location>
</feature>
<feature type="sequence conflict" description="In Ref. 2; AAD41025." evidence="25" ref="2">
    <original>A</original>
    <variation>T</variation>
    <location>
        <position position="193"/>
    </location>
</feature>
<feature type="sequence conflict" description="In Ref. 6; BAE33798." evidence="25" ref="6">
    <original>K</original>
    <variation>E</variation>
    <location>
        <position position="226"/>
    </location>
</feature>
<feature type="sequence conflict" description="In Ref. 6; BAE26547." evidence="25" ref="6">
    <original>H</original>
    <variation>R</variation>
    <location>
        <position position="297"/>
    </location>
</feature>
<feature type="sequence conflict" description="In Ref. 3; AAD04181." evidence="25" ref="3">
    <original>D</original>
    <variation>G</variation>
    <location>
        <position position="352"/>
    </location>
</feature>
<feature type="sequence conflict" description="In Ref. 2; AAD41025." evidence="25" ref="2">
    <original>N</original>
    <variation>D</variation>
    <location>
        <position position="377"/>
    </location>
</feature>
<feature type="sequence conflict" description="In Ref. 2; AAD41025." evidence="25" ref="2">
    <original>I</original>
    <variation>T</variation>
    <location>
        <position position="380"/>
    </location>
</feature>
<feature type="sequence conflict" description="In Ref. 2; AAD41025." evidence="25" ref="2">
    <original>A</original>
    <variation>R</variation>
    <location>
        <position position="523"/>
    </location>
</feature>